<comment type="function">
    <text>In N.crassa grown under amino acid starvation conditions, this protein is required for increasing the transcription of the genes coding for many amino acid biosynthetic pathways enzymes. This transcription factor binds and recognize the DNA sequence: 5'-TGACTC-3'.</text>
</comment>
<comment type="subunit">
    <text>Binds DNA as a dimer.</text>
</comment>
<comment type="subcellular location">
    <subcellularLocation>
        <location>Nucleus</location>
    </subcellularLocation>
</comment>
<comment type="similarity">
    <text evidence="3">Belongs to the bZIP family. GCN4 subfamily.</text>
</comment>
<dbReference type="EMBL" id="J03262">
    <property type="protein sequence ID" value="AAA33577.1"/>
    <property type="molecule type" value="Genomic_DNA"/>
</dbReference>
<dbReference type="EMBL" id="BX897679">
    <property type="protein sequence ID" value="CAE85619.1"/>
    <property type="molecule type" value="Genomic_DNA"/>
</dbReference>
<dbReference type="EMBL" id="CM002241">
    <property type="protein sequence ID" value="EAA28429.1"/>
    <property type="molecule type" value="Genomic_DNA"/>
</dbReference>
<dbReference type="PIR" id="A30208">
    <property type="entry name" value="A30208"/>
</dbReference>
<dbReference type="RefSeq" id="XP_957665.1">
    <property type="nucleotide sequence ID" value="XM_952572.3"/>
</dbReference>
<dbReference type="SMR" id="P11115"/>
<dbReference type="STRING" id="367110.P11115"/>
<dbReference type="PaxDb" id="5141-EFNCRP00000003676"/>
<dbReference type="EnsemblFungi" id="EAA28429">
    <property type="protein sequence ID" value="EAA28429"/>
    <property type="gene ID" value="NCU04050"/>
</dbReference>
<dbReference type="GeneID" id="3873836"/>
<dbReference type="KEGG" id="ncr:NCU04050"/>
<dbReference type="VEuPathDB" id="FungiDB:NCU04050"/>
<dbReference type="HOGENOM" id="CLU_029566_0_0_1"/>
<dbReference type="InParanoid" id="P11115"/>
<dbReference type="OMA" id="GPGHEEW"/>
<dbReference type="OrthoDB" id="5419235at2759"/>
<dbReference type="Proteomes" id="UP000001805">
    <property type="component" value="Chromosome 5, Linkage Group VI"/>
</dbReference>
<dbReference type="GO" id="GO:0005634">
    <property type="term" value="C:nucleus"/>
    <property type="evidence" value="ECO:0007669"/>
    <property type="project" value="UniProtKB-SubCell"/>
</dbReference>
<dbReference type="GO" id="GO:0005667">
    <property type="term" value="C:transcription regulator complex"/>
    <property type="evidence" value="ECO:0000318"/>
    <property type="project" value="GO_Central"/>
</dbReference>
<dbReference type="GO" id="GO:0000981">
    <property type="term" value="F:DNA-binding transcription factor activity, RNA polymerase II-specific"/>
    <property type="evidence" value="ECO:0000318"/>
    <property type="project" value="GO_Central"/>
</dbReference>
<dbReference type="GO" id="GO:0000978">
    <property type="term" value="F:RNA polymerase II cis-regulatory region sequence-specific DNA binding"/>
    <property type="evidence" value="ECO:0000318"/>
    <property type="project" value="GO_Central"/>
</dbReference>
<dbReference type="GO" id="GO:0008652">
    <property type="term" value="P:amino acid biosynthetic process"/>
    <property type="evidence" value="ECO:0007669"/>
    <property type="project" value="UniProtKB-KW"/>
</dbReference>
<dbReference type="GO" id="GO:1903833">
    <property type="term" value="P:positive regulation of cellular response to amino acid starvation"/>
    <property type="evidence" value="ECO:0000318"/>
    <property type="project" value="GO_Central"/>
</dbReference>
<dbReference type="GO" id="GO:0045944">
    <property type="term" value="P:positive regulation of transcription by RNA polymerase II"/>
    <property type="evidence" value="ECO:0000318"/>
    <property type="project" value="GO_Central"/>
</dbReference>
<dbReference type="CDD" id="cd12193">
    <property type="entry name" value="bZIP_GCN4"/>
    <property type="match status" value="1"/>
</dbReference>
<dbReference type="FunFam" id="3.30.160.60:FF:001491">
    <property type="entry name" value="Cross-pathway control protein A"/>
    <property type="match status" value="1"/>
</dbReference>
<dbReference type="Gene3D" id="3.30.160.60">
    <property type="entry name" value="Classic Zinc Finger"/>
    <property type="match status" value="1"/>
</dbReference>
<dbReference type="InterPro" id="IPR004827">
    <property type="entry name" value="bZIP"/>
</dbReference>
<dbReference type="InterPro" id="IPR046347">
    <property type="entry name" value="bZIP_sf"/>
</dbReference>
<dbReference type="PANTHER" id="PTHR13044">
    <property type="entry name" value="ACTIVATING TRANSCRIPTION FACTOR ATF 4/5"/>
    <property type="match status" value="1"/>
</dbReference>
<dbReference type="PANTHER" id="PTHR13044:SF14">
    <property type="entry name" value="CRYPTOCEPHAL, ISOFORM A"/>
    <property type="match status" value="1"/>
</dbReference>
<dbReference type="SUPFAM" id="SSF57959">
    <property type="entry name" value="Leucine zipper domain"/>
    <property type="match status" value="1"/>
</dbReference>
<dbReference type="PROSITE" id="PS50217">
    <property type="entry name" value="BZIP"/>
    <property type="match status" value="1"/>
</dbReference>
<dbReference type="PROSITE" id="PS00036">
    <property type="entry name" value="BZIP_BASIC"/>
    <property type="match status" value="1"/>
</dbReference>
<proteinExistence type="evidence at protein level"/>
<keyword id="KW-0010">Activator</keyword>
<keyword id="KW-0028">Amino-acid biosynthesis</keyword>
<keyword id="KW-0238">DNA-binding</keyword>
<keyword id="KW-0539">Nucleus</keyword>
<keyword id="KW-1185">Reference proteome</keyword>
<keyword id="KW-0804">Transcription</keyword>
<keyword id="KW-0805">Transcription regulation</keyword>
<organism>
    <name type="scientific">Neurospora crassa (strain ATCC 24698 / 74-OR23-1A / CBS 708.71 / DSM 1257 / FGSC 987)</name>
    <dbReference type="NCBI Taxonomy" id="367110"/>
    <lineage>
        <taxon>Eukaryota</taxon>
        <taxon>Fungi</taxon>
        <taxon>Dikarya</taxon>
        <taxon>Ascomycota</taxon>
        <taxon>Pezizomycotina</taxon>
        <taxon>Sordariomycetes</taxon>
        <taxon>Sordariomycetidae</taxon>
        <taxon>Sordariales</taxon>
        <taxon>Sordariaceae</taxon>
        <taxon>Neurospora</taxon>
    </lineage>
</organism>
<name>CPC1_NEUCR</name>
<sequence length="270" mass="29226">MFSELDLLDFATFDGGATTEAAFASPANQTYDLSSSVPSSVSNMGTVSPQELLLHEPYLSAPSSTALTALTSPSLFDGSPDFDTFDISPNFGHSDLENPDTWFSLFPDATPLPQAQAQVQTQPQTQTQTEQQTQPLPELVQSVQPTVQPTVEQTVHSVEASPATPSEDLEVLSPGSGHQRRKSSVSPPSGRHSSVAGVGSRRRDKPLPPIIVEDPSDVVAMKRARNTLAARKSRERKAQRLEELEAKIEELIAERDRWKNLALAHGASTE</sequence>
<protein>
    <recommendedName>
        <fullName>Cross-pathway control protein 1</fullName>
    </recommendedName>
</protein>
<accession>P11115</accession>
<accession>Q7RZG6</accession>
<reference key="1">
    <citation type="journal article" date="1988" name="Proc. Natl. Acad. Sci. U.S.A.">
        <title>The cross-pathway control gene of Neurospora crassa, cpc-1, encodes a protein similar to GCN4 of yeast and the DNA-binding domain of the oncogene v-jun-encoded protein.</title>
        <authorList>
            <person name="Paluh J.L."/>
            <person name="Orbach M.J."/>
            <person name="Legerton T.L."/>
            <person name="Yanofsky C."/>
        </authorList>
    </citation>
    <scope>NUCLEOTIDE SEQUENCE [GENOMIC DNA]</scope>
</reference>
<reference key="2">
    <citation type="journal article" date="2003" name="Nucleic Acids Res.">
        <title>What's in the genome of a filamentous fungus? Analysis of the Neurospora genome sequence.</title>
        <authorList>
            <person name="Mannhaupt G."/>
            <person name="Montrone C."/>
            <person name="Haase D."/>
            <person name="Mewes H.-W."/>
            <person name="Aign V."/>
            <person name="Hoheisel J.D."/>
            <person name="Fartmann B."/>
            <person name="Nyakatura G."/>
            <person name="Kempken F."/>
            <person name="Maier J."/>
            <person name="Schulte U."/>
        </authorList>
    </citation>
    <scope>NUCLEOTIDE SEQUENCE [LARGE SCALE GENOMIC DNA]</scope>
    <source>
        <strain>ATCC 24698 / 74-OR23-1A / CBS 708.71 / DSM 1257 / FGSC 987</strain>
    </source>
</reference>
<reference key="3">
    <citation type="journal article" date="2003" name="Nature">
        <title>The genome sequence of the filamentous fungus Neurospora crassa.</title>
        <authorList>
            <person name="Galagan J.E."/>
            <person name="Calvo S.E."/>
            <person name="Borkovich K.A."/>
            <person name="Selker E.U."/>
            <person name="Read N.D."/>
            <person name="Jaffe D.B."/>
            <person name="FitzHugh W."/>
            <person name="Ma L.-J."/>
            <person name="Smirnov S."/>
            <person name="Purcell S."/>
            <person name="Rehman B."/>
            <person name="Elkins T."/>
            <person name="Engels R."/>
            <person name="Wang S."/>
            <person name="Nielsen C.B."/>
            <person name="Butler J."/>
            <person name="Endrizzi M."/>
            <person name="Qui D."/>
            <person name="Ianakiev P."/>
            <person name="Bell-Pedersen D."/>
            <person name="Nelson M.A."/>
            <person name="Werner-Washburne M."/>
            <person name="Selitrennikoff C.P."/>
            <person name="Kinsey J.A."/>
            <person name="Braun E.L."/>
            <person name="Zelter A."/>
            <person name="Schulte U."/>
            <person name="Kothe G.O."/>
            <person name="Jedd G."/>
            <person name="Mewes H.-W."/>
            <person name="Staben C."/>
            <person name="Marcotte E."/>
            <person name="Greenberg D."/>
            <person name="Roy A."/>
            <person name="Foley K."/>
            <person name="Naylor J."/>
            <person name="Stange-Thomann N."/>
            <person name="Barrett R."/>
            <person name="Gnerre S."/>
            <person name="Kamal M."/>
            <person name="Kamvysselis M."/>
            <person name="Mauceli E.W."/>
            <person name="Bielke C."/>
            <person name="Rudd S."/>
            <person name="Frishman D."/>
            <person name="Krystofova S."/>
            <person name="Rasmussen C."/>
            <person name="Metzenberg R.L."/>
            <person name="Perkins D.D."/>
            <person name="Kroken S."/>
            <person name="Cogoni C."/>
            <person name="Macino G."/>
            <person name="Catcheside D.E.A."/>
            <person name="Li W."/>
            <person name="Pratt R.J."/>
            <person name="Osmani S.A."/>
            <person name="DeSouza C.P.C."/>
            <person name="Glass N.L."/>
            <person name="Orbach M.J."/>
            <person name="Berglund J.A."/>
            <person name="Voelker R."/>
            <person name="Yarden O."/>
            <person name="Plamann M."/>
            <person name="Seiler S."/>
            <person name="Dunlap J.C."/>
            <person name="Radford A."/>
            <person name="Aramayo R."/>
            <person name="Natvig D.O."/>
            <person name="Alex L.A."/>
            <person name="Mannhaupt G."/>
            <person name="Ebbole D.J."/>
            <person name="Freitag M."/>
            <person name="Paulsen I."/>
            <person name="Sachs M.S."/>
            <person name="Lander E.S."/>
            <person name="Nusbaum C."/>
            <person name="Birren B.W."/>
        </authorList>
    </citation>
    <scope>NUCLEOTIDE SEQUENCE [LARGE SCALE GENOMIC DNA]</scope>
    <source>
        <strain>ATCC 24698 / 74-OR23-1A / CBS 708.71 / DSM 1257 / FGSC 987</strain>
    </source>
</reference>
<reference key="4">
    <citation type="journal article" date="1991" name="Mol. Cell. Biol.">
        <title>Characterization of Neurospora CPC1, a bZIP DNA-binding protein that does not require aligned heptad leucines for dimerization.</title>
        <authorList>
            <person name="Paluh J.L."/>
            <person name="Yanofsky C."/>
        </authorList>
    </citation>
    <scope>DNA-BINDING</scope>
    <scope>DIMERIZATION</scope>
</reference>
<feature type="chain" id="PRO_0000076488" description="Cross-pathway control protein 1">
    <location>
        <begin position="1"/>
        <end position="270"/>
    </location>
</feature>
<feature type="domain" description="bZIP" evidence="1">
    <location>
        <begin position="216"/>
        <end position="270"/>
    </location>
</feature>
<feature type="region of interest" description="Disordered" evidence="2">
    <location>
        <begin position="114"/>
        <end position="135"/>
    </location>
</feature>
<feature type="region of interest" description="Disordered" evidence="2">
    <location>
        <begin position="153"/>
        <end position="213"/>
    </location>
</feature>
<feature type="region of interest" description="Basic motif" evidence="1">
    <location>
        <begin position="222"/>
        <end position="240"/>
    </location>
</feature>
<feature type="region of interest" description="Leucine-zipper" evidence="1">
    <location>
        <begin position="241"/>
        <end position="248"/>
    </location>
</feature>
<feature type="compositionally biased region" description="Low complexity" evidence="2">
    <location>
        <begin position="184"/>
        <end position="195"/>
    </location>
</feature>
<gene>
    <name type="primary">cpc-1</name>
    <name type="ORF">B2C22.100</name>
    <name type="ORF">NCU04050</name>
</gene>
<evidence type="ECO:0000255" key="1">
    <source>
        <dbReference type="PROSITE-ProRule" id="PRU00978"/>
    </source>
</evidence>
<evidence type="ECO:0000256" key="2">
    <source>
        <dbReference type="SAM" id="MobiDB-lite"/>
    </source>
</evidence>
<evidence type="ECO:0000305" key="3"/>